<evidence type="ECO:0000269" key="1">
    <source>
    </source>
</evidence>
<evidence type="ECO:0000269" key="2">
    <source>
    </source>
</evidence>
<evidence type="ECO:0000303" key="3">
    <source>
    </source>
</evidence>
<evidence type="ECO:0000305" key="4"/>
<evidence type="ECO:0000305" key="5">
    <source>
    </source>
</evidence>
<evidence type="ECO:0000305" key="6">
    <source>
    </source>
</evidence>
<protein>
    <recommendedName>
        <fullName evidence="3">NLP effector protein 3</fullName>
    </recommendedName>
    <alternativeName>
        <fullName evidence="3">Nep1-like protein 3</fullName>
    </alternativeName>
</protein>
<organism>
    <name type="scientific">Plasmopara viticola</name>
    <name type="common">Downy mildew of grapevine</name>
    <name type="synonym">Botrytis viticola</name>
    <dbReference type="NCBI Taxonomy" id="143451"/>
    <lineage>
        <taxon>Eukaryota</taxon>
        <taxon>Sar</taxon>
        <taxon>Stramenopiles</taxon>
        <taxon>Oomycota</taxon>
        <taxon>Peronosporales</taxon>
        <taxon>Peronosporaceae</taxon>
        <taxon>Plasmopara</taxon>
    </lineage>
</organism>
<accession>A0A6B9QR77</accession>
<accession>A0A6G7KV55</accession>
<name>NLP3_PLAVT</name>
<dbReference type="EMBL" id="MN938412">
    <property type="protein sequence ID" value="QII89140.1"/>
    <property type="molecule type" value="mRNA"/>
</dbReference>
<dbReference type="EMBL" id="MN720268">
    <property type="protein sequence ID" value="QHG11502.1"/>
    <property type="molecule type" value="mRNA"/>
</dbReference>
<dbReference type="SMR" id="A0A6B9QR77"/>
<dbReference type="GO" id="GO:0005576">
    <property type="term" value="C:extracellular region"/>
    <property type="evidence" value="ECO:0007669"/>
    <property type="project" value="UniProtKB-SubCell"/>
</dbReference>
<dbReference type="GO" id="GO:0030430">
    <property type="term" value="C:host cell cytoplasm"/>
    <property type="evidence" value="ECO:0007669"/>
    <property type="project" value="UniProtKB-SubCell"/>
</dbReference>
<dbReference type="InterPro" id="IPR008701">
    <property type="entry name" value="NPP1"/>
</dbReference>
<dbReference type="PANTHER" id="PTHR33657">
    <property type="entry name" value="DOMAIN PROTEIN, PUTATIVE (AFU_ORTHOLOGUE AFUA_5G00600)-RELATED"/>
    <property type="match status" value="1"/>
</dbReference>
<dbReference type="PANTHER" id="PTHR33657:SF8">
    <property type="entry name" value="DOMAIN PROTEIN, PUTATIVE (AFU_ORTHOLOGUE AFUA_5G00600)-RELATED"/>
    <property type="match status" value="1"/>
</dbReference>
<dbReference type="Pfam" id="PF05630">
    <property type="entry name" value="NPP1"/>
    <property type="match status" value="1"/>
</dbReference>
<dbReference type="PIRSF" id="PIRSF029958">
    <property type="entry name" value="Necrosis-inducing_protein"/>
    <property type="match status" value="1"/>
</dbReference>
<gene>
    <name evidence="3" type="primary">NLP3</name>
</gene>
<feature type="chain" id="PRO_0000456940" description="NLP effector protein 3">
    <location>
        <begin position="1"/>
        <end position="223"/>
    </location>
</feature>
<feature type="short sequence motif" description="Conserved undecapeptide motif" evidence="5 6">
    <location>
        <begin position="90"/>
        <end position="100"/>
    </location>
</feature>
<feature type="short sequence motif" description="Conserved heptapeptide motif" evidence="5 6">
    <location>
        <begin position="107"/>
        <end position="113"/>
    </location>
</feature>
<feature type="sequence conflict" description="In Ref. 1; QII89140." evidence="4" ref="1">
    <original>V</original>
    <variation>I</variation>
    <location>
        <position position="78"/>
    </location>
</feature>
<sequence length="223" mass="25195">MGPWEAKWIRHSDVRPFPQPEPMTVEEKVAVMLKPELHVSSGCHPYPAVNDLGETNGGLKTTGAPSGMCKGSGWGSQVYGRHASFRGVWAIMYVWYFPKDMPSAHFGHRHDWEHVIVWIEKPVVENVKILAVTPSFHDGYSKQVPPDPSHLNGLAAKFIYESEWPINHALRPTRKGGKKQDLILWEQMSSNARHALNIVPWGAANTPFNDFVFMGRLEKAFPF</sequence>
<reference key="1">
    <citation type="journal article" date="2020" name="Front. Plant Sci.">
        <title>Identification and characterization of Nep1-like proteins from the grapevine downy mildew pathogen Plasmopara viticola.</title>
        <authorList>
            <person name="Schumacher S."/>
            <person name="Grosser K."/>
            <person name="Voegele R.T."/>
            <person name="Kassemeyer H.H."/>
            <person name="Fuchs R."/>
        </authorList>
    </citation>
    <scope>NUCLEOTIDE SEQUENCE [MRNA]</scope>
    <scope>FUNCTION</scope>
    <scope>INDUCTION</scope>
    <scope>SUBCELLULAR LOCATION</scope>
    <scope>DOMAIN</scope>
    <source>
        <strain>Pv1446</strain>
    </source>
</reference>
<reference key="2">
    <citation type="journal article" date="2022" name="Plant Signal. Behav.">
        <title>Functional analysis of the Nep1-like proteins from Plasmopara viticola.</title>
        <authorList>
            <person name="Xiang J."/>
            <person name="Cheng J."/>
            <person name="Wei L."/>
            <person name="Li M."/>
            <person name="Wu J."/>
        </authorList>
    </citation>
    <scope>FUNCTION</scope>
    <scope>DOMAIN</scope>
    <scope>INDUCTION</scope>
</reference>
<comment type="function">
    <text evidence="1 2">Probable secreted effector that may act as a pathogen-associated molecular pattern (PAMP) recognized by the plant immune system (PubMed:32117400). Seems not to induce necrosis, neither in several susceptible or resistant Vitis species nor in the dicot model plant Nicotiana benthamiana (PubMed:32117400, PubMed:35152834).</text>
</comment>
<comment type="subcellular location">
    <subcellularLocation>
        <location evidence="5">Secreted</location>
    </subcellularLocation>
    <subcellularLocation>
        <location evidence="1">Host cytoplasm</location>
    </subcellularLocation>
</comment>
<comment type="induction">
    <text evidence="1 2">Expressed strongly at the early stages of host infection (up to 24 hours after infection) but subsided quickly afterward.</text>
</comment>
<comment type="domain">
    <text evidence="5 6">The structure of NLP effectors is remarkably conserved with a high level of conservation of a central region containing the conserved undecapeptide motif AIMYAWYFPKD and heptapeptide motif GHRHDWE.</text>
</comment>
<comment type="similarity">
    <text evidence="4">Belongs to the Necrosis inducing protein (NPP1) family.</text>
</comment>
<keyword id="KW-1035">Host cytoplasm</keyword>
<keyword id="KW-0964">Secreted</keyword>
<keyword id="KW-0843">Virulence</keyword>
<proteinExistence type="evidence at transcript level"/>